<dbReference type="EC" id="2.7.7.7" evidence="1"/>
<dbReference type="EMBL" id="CP000260">
    <property type="protein sequence ID" value="ABF34700.1"/>
    <property type="molecule type" value="Genomic_DNA"/>
</dbReference>
<dbReference type="SMR" id="Q1JF59"/>
<dbReference type="KEGG" id="sph:MGAS10270_Spy1635"/>
<dbReference type="HOGENOM" id="CLU_012348_1_2_9"/>
<dbReference type="Proteomes" id="UP000002436">
    <property type="component" value="Chromosome"/>
</dbReference>
<dbReference type="GO" id="GO:0005829">
    <property type="term" value="C:cytosol"/>
    <property type="evidence" value="ECO:0007669"/>
    <property type="project" value="TreeGrafter"/>
</dbReference>
<dbReference type="GO" id="GO:0003684">
    <property type="term" value="F:damaged DNA binding"/>
    <property type="evidence" value="ECO:0007669"/>
    <property type="project" value="InterPro"/>
</dbReference>
<dbReference type="GO" id="GO:0003887">
    <property type="term" value="F:DNA-directed DNA polymerase activity"/>
    <property type="evidence" value="ECO:0007669"/>
    <property type="project" value="UniProtKB-UniRule"/>
</dbReference>
<dbReference type="GO" id="GO:0000287">
    <property type="term" value="F:magnesium ion binding"/>
    <property type="evidence" value="ECO:0007669"/>
    <property type="project" value="UniProtKB-UniRule"/>
</dbReference>
<dbReference type="GO" id="GO:0006261">
    <property type="term" value="P:DNA-templated DNA replication"/>
    <property type="evidence" value="ECO:0007669"/>
    <property type="project" value="UniProtKB-UniRule"/>
</dbReference>
<dbReference type="GO" id="GO:0042276">
    <property type="term" value="P:error-prone translesion synthesis"/>
    <property type="evidence" value="ECO:0007669"/>
    <property type="project" value="TreeGrafter"/>
</dbReference>
<dbReference type="GO" id="GO:0009432">
    <property type="term" value="P:SOS response"/>
    <property type="evidence" value="ECO:0007669"/>
    <property type="project" value="TreeGrafter"/>
</dbReference>
<dbReference type="CDD" id="cd03586">
    <property type="entry name" value="PolY_Pol_IV_kappa"/>
    <property type="match status" value="1"/>
</dbReference>
<dbReference type="FunFam" id="3.30.1490.100:FF:000004">
    <property type="entry name" value="DNA polymerase IV"/>
    <property type="match status" value="1"/>
</dbReference>
<dbReference type="FunFam" id="3.40.1170.60:FF:000001">
    <property type="entry name" value="DNA polymerase IV"/>
    <property type="match status" value="1"/>
</dbReference>
<dbReference type="Gene3D" id="3.30.70.270">
    <property type="match status" value="1"/>
</dbReference>
<dbReference type="Gene3D" id="3.40.1170.60">
    <property type="match status" value="1"/>
</dbReference>
<dbReference type="Gene3D" id="1.10.150.20">
    <property type="entry name" value="5' to 3' exonuclease, C-terminal subdomain"/>
    <property type="match status" value="1"/>
</dbReference>
<dbReference type="Gene3D" id="3.30.1490.100">
    <property type="entry name" value="DNA polymerase, Y-family, little finger domain"/>
    <property type="match status" value="1"/>
</dbReference>
<dbReference type="HAMAP" id="MF_01113">
    <property type="entry name" value="DNApol_IV"/>
    <property type="match status" value="1"/>
</dbReference>
<dbReference type="InterPro" id="IPR043502">
    <property type="entry name" value="DNA/RNA_pol_sf"/>
</dbReference>
<dbReference type="InterPro" id="IPR036775">
    <property type="entry name" value="DNA_pol_Y-fam_lit_finger_sf"/>
</dbReference>
<dbReference type="InterPro" id="IPR017961">
    <property type="entry name" value="DNA_pol_Y-fam_little_finger"/>
</dbReference>
<dbReference type="InterPro" id="IPR050116">
    <property type="entry name" value="DNA_polymerase-Y"/>
</dbReference>
<dbReference type="InterPro" id="IPR022880">
    <property type="entry name" value="DNApol_IV"/>
</dbReference>
<dbReference type="InterPro" id="IPR024728">
    <property type="entry name" value="PolY_HhH_motif"/>
</dbReference>
<dbReference type="InterPro" id="IPR043128">
    <property type="entry name" value="Rev_trsase/Diguanyl_cyclase"/>
</dbReference>
<dbReference type="InterPro" id="IPR001126">
    <property type="entry name" value="UmuC"/>
</dbReference>
<dbReference type="NCBIfam" id="NF002677">
    <property type="entry name" value="PRK02406.1"/>
    <property type="match status" value="1"/>
</dbReference>
<dbReference type="NCBIfam" id="NF010731">
    <property type="entry name" value="PRK14133.1"/>
    <property type="match status" value="1"/>
</dbReference>
<dbReference type="PANTHER" id="PTHR11076:SF33">
    <property type="entry name" value="DNA POLYMERASE KAPPA"/>
    <property type="match status" value="1"/>
</dbReference>
<dbReference type="PANTHER" id="PTHR11076">
    <property type="entry name" value="DNA REPAIR POLYMERASE UMUC / TRANSFERASE FAMILY MEMBER"/>
    <property type="match status" value="1"/>
</dbReference>
<dbReference type="Pfam" id="PF00817">
    <property type="entry name" value="IMS"/>
    <property type="match status" value="1"/>
</dbReference>
<dbReference type="Pfam" id="PF11799">
    <property type="entry name" value="IMS_C"/>
    <property type="match status" value="1"/>
</dbReference>
<dbReference type="Pfam" id="PF11798">
    <property type="entry name" value="IMS_HHH"/>
    <property type="match status" value="1"/>
</dbReference>
<dbReference type="SUPFAM" id="SSF56672">
    <property type="entry name" value="DNA/RNA polymerases"/>
    <property type="match status" value="1"/>
</dbReference>
<dbReference type="SUPFAM" id="SSF100879">
    <property type="entry name" value="Lesion bypass DNA polymerase (Y-family), little finger domain"/>
    <property type="match status" value="1"/>
</dbReference>
<dbReference type="PROSITE" id="PS50173">
    <property type="entry name" value="UMUC"/>
    <property type="match status" value="1"/>
</dbReference>
<reference key="1">
    <citation type="journal article" date="2006" name="Proc. Natl. Acad. Sci. U.S.A.">
        <title>Molecular genetic anatomy of inter- and intraserotype variation in the human bacterial pathogen group A Streptococcus.</title>
        <authorList>
            <person name="Beres S.B."/>
            <person name="Richter E.W."/>
            <person name="Nagiec M.J."/>
            <person name="Sumby P."/>
            <person name="Porcella S.F."/>
            <person name="DeLeo F.R."/>
            <person name="Musser J.M."/>
        </authorList>
    </citation>
    <scope>NUCLEOTIDE SEQUENCE [LARGE SCALE GENOMIC DNA]</scope>
    <source>
        <strain>MGAS10270</strain>
    </source>
</reference>
<proteinExistence type="inferred from homology"/>
<comment type="function">
    <text evidence="1">Poorly processive, error-prone DNA polymerase involved in untargeted mutagenesis. Copies undamaged DNA at stalled replication forks, which arise in vivo from mismatched or misaligned primer ends. These misaligned primers can be extended by PolIV. Exhibits no 3'-5' exonuclease (proofreading) activity. May be involved in translesional synthesis, in conjunction with the beta clamp from PolIII.</text>
</comment>
<comment type="catalytic activity">
    <reaction evidence="1">
        <text>DNA(n) + a 2'-deoxyribonucleoside 5'-triphosphate = DNA(n+1) + diphosphate</text>
        <dbReference type="Rhea" id="RHEA:22508"/>
        <dbReference type="Rhea" id="RHEA-COMP:17339"/>
        <dbReference type="Rhea" id="RHEA-COMP:17340"/>
        <dbReference type="ChEBI" id="CHEBI:33019"/>
        <dbReference type="ChEBI" id="CHEBI:61560"/>
        <dbReference type="ChEBI" id="CHEBI:173112"/>
        <dbReference type="EC" id="2.7.7.7"/>
    </reaction>
</comment>
<comment type="cofactor">
    <cofactor evidence="1">
        <name>Mg(2+)</name>
        <dbReference type="ChEBI" id="CHEBI:18420"/>
    </cofactor>
    <text evidence="1">Binds 2 magnesium ions per subunit.</text>
</comment>
<comment type="subunit">
    <text evidence="1">Monomer.</text>
</comment>
<comment type="subcellular location">
    <subcellularLocation>
        <location evidence="1">Cytoplasm</location>
    </subcellularLocation>
</comment>
<comment type="similarity">
    <text evidence="1">Belongs to the DNA polymerase type-Y family.</text>
</comment>
<accession>Q1JF59</accession>
<feature type="chain" id="PRO_1000084956" description="DNA polymerase IV">
    <location>
        <begin position="1"/>
        <end position="364"/>
    </location>
</feature>
<feature type="domain" description="UmuC" evidence="1">
    <location>
        <begin position="14"/>
        <end position="198"/>
    </location>
</feature>
<feature type="active site" evidence="1">
    <location>
        <position position="117"/>
    </location>
</feature>
<feature type="binding site" evidence="1">
    <location>
        <position position="18"/>
    </location>
    <ligand>
        <name>Mg(2+)</name>
        <dbReference type="ChEBI" id="CHEBI:18420"/>
    </ligand>
</feature>
<feature type="binding site" evidence="1">
    <location>
        <position position="116"/>
    </location>
    <ligand>
        <name>Mg(2+)</name>
        <dbReference type="ChEBI" id="CHEBI:18420"/>
    </ligand>
</feature>
<feature type="site" description="Substrate discrimination" evidence="1">
    <location>
        <position position="23"/>
    </location>
</feature>
<name>DPO4_STRPD</name>
<sequence>MLIFPLINDTSRKIIHIDMDAFFAAVEERDNPALKGKPVVIGKDPRETGGRGVVSTCNYEARKYGIHSAMSSKEAYERCPKAIFISGNYEKYRTVGDQIRRIFKRYTDVVEPMSIDEAYLDVTDNKLGIKSAVKIAKLIQHDIWKEVGLTCSAGVSYNKFLAKLASDFEKPHGLTLVLKEDALCFLAKLPIEKFHGVGKKSVEKLHDMGIYTGQDLLAVPEMTLIDHFGRFGFDLYRKARGISNSPVKSDRIRKSIGSERTYAKLLYQETDIKAEISKNAKRVAALLQDHKKLGKTIVLKVRYADFTTLTKRVTLPELTRNAAQIEQVAGDIFDSLSENPAGIRLLGVTMTNLEDKVADISLDL</sequence>
<protein>
    <recommendedName>
        <fullName evidence="1">DNA polymerase IV</fullName>
        <shortName evidence="1">Pol IV</shortName>
        <ecNumber evidence="1">2.7.7.7</ecNumber>
    </recommendedName>
</protein>
<gene>
    <name evidence="1" type="primary">dinB</name>
    <name type="ordered locus">MGAS10270_Spy1635</name>
</gene>
<organism>
    <name type="scientific">Streptococcus pyogenes serotype M2 (strain MGAS10270)</name>
    <dbReference type="NCBI Taxonomy" id="370552"/>
    <lineage>
        <taxon>Bacteria</taxon>
        <taxon>Bacillati</taxon>
        <taxon>Bacillota</taxon>
        <taxon>Bacilli</taxon>
        <taxon>Lactobacillales</taxon>
        <taxon>Streptococcaceae</taxon>
        <taxon>Streptococcus</taxon>
    </lineage>
</organism>
<keyword id="KW-0963">Cytoplasm</keyword>
<keyword id="KW-0227">DNA damage</keyword>
<keyword id="KW-0234">DNA repair</keyword>
<keyword id="KW-0235">DNA replication</keyword>
<keyword id="KW-0238">DNA-binding</keyword>
<keyword id="KW-0239">DNA-directed DNA polymerase</keyword>
<keyword id="KW-0460">Magnesium</keyword>
<keyword id="KW-0479">Metal-binding</keyword>
<keyword id="KW-0515">Mutator protein</keyword>
<keyword id="KW-0548">Nucleotidyltransferase</keyword>
<keyword id="KW-0808">Transferase</keyword>
<evidence type="ECO:0000255" key="1">
    <source>
        <dbReference type="HAMAP-Rule" id="MF_01113"/>
    </source>
</evidence>